<name>GNGF_STRP1</name>
<sequence length="325" mass="35706">MKNPKMTVIGGGTGISIILKSLRNEAVDITAVVTVADDGGSSGELRNAMQLAPPGDLRNVLLAMSDMPKFYERVFQYRFNESDGALAGHPLGNLIIAGISEMQGSTYNAIQILTKFFHITGKIYPSSEQALTLHAVFKDGHEVAGESSIAKYPGMIDHVYVTNTYNDQKPQASRKVVEAILESDMIVLGPGSLFTSILPNLVIPEIKEALRQTKAEVVYICNIMTQYGETEQFSDADHVAVLNQHLGRDLIDTVLVNVAKVPQAYMNSNKFDEYLVQVDHDFAGLCRAAKRVISSYFLRLENGGAFHDGNLVVEELMNLVRIVKQ</sequence>
<organism>
    <name type="scientific">Streptococcus pyogenes serotype M1</name>
    <dbReference type="NCBI Taxonomy" id="301447"/>
    <lineage>
        <taxon>Bacteria</taxon>
        <taxon>Bacillati</taxon>
        <taxon>Bacillota</taxon>
        <taxon>Bacilli</taxon>
        <taxon>Lactobacillales</taxon>
        <taxon>Streptococcaceae</taxon>
        <taxon>Streptococcus</taxon>
    </lineage>
</organism>
<proteinExistence type="inferred from homology"/>
<keyword id="KW-0963">Cytoplasm</keyword>
<keyword id="KW-1185">Reference proteome</keyword>
<dbReference type="EMBL" id="AE004092">
    <property type="protein sequence ID" value="AAK33616.1"/>
    <property type="molecule type" value="Genomic_DNA"/>
</dbReference>
<dbReference type="EMBL" id="CP000017">
    <property type="protein sequence ID" value="AAZ51158.1"/>
    <property type="molecule type" value="Genomic_DNA"/>
</dbReference>
<dbReference type="RefSeq" id="NP_268895.1">
    <property type="nucleotide sequence ID" value="NC_002737.2"/>
</dbReference>
<dbReference type="SMR" id="Q9A0R7"/>
<dbReference type="PaxDb" id="1314-HKU360_00550"/>
<dbReference type="KEGG" id="spy:SPy_0653"/>
<dbReference type="KEGG" id="spz:M5005_Spy0540"/>
<dbReference type="PATRIC" id="fig|160490.10.peg.555"/>
<dbReference type="HOGENOM" id="CLU_044041_0_1_9"/>
<dbReference type="OMA" id="LCGDDDW"/>
<dbReference type="Proteomes" id="UP000000750">
    <property type="component" value="Chromosome"/>
</dbReference>
<dbReference type="GO" id="GO:0005737">
    <property type="term" value="C:cytoplasm"/>
    <property type="evidence" value="ECO:0007669"/>
    <property type="project" value="UniProtKB-SubCell"/>
</dbReference>
<dbReference type="GO" id="GO:0043743">
    <property type="term" value="F:LPPG:FO 2-phospho-L-lactate transferase activity"/>
    <property type="evidence" value="ECO:0007669"/>
    <property type="project" value="InterPro"/>
</dbReference>
<dbReference type="GO" id="GO:0008360">
    <property type="term" value="P:regulation of cell shape"/>
    <property type="evidence" value="ECO:0007669"/>
    <property type="project" value="UniProtKB-UniRule"/>
</dbReference>
<dbReference type="CDD" id="cd07044">
    <property type="entry name" value="CofD_YvcK"/>
    <property type="match status" value="1"/>
</dbReference>
<dbReference type="Gene3D" id="3.40.50.10680">
    <property type="entry name" value="CofD-like domains"/>
    <property type="match status" value="1"/>
</dbReference>
<dbReference type="HAMAP" id="MF_00973">
    <property type="entry name" value="Gluconeogen_factor"/>
    <property type="match status" value="1"/>
</dbReference>
<dbReference type="InterPro" id="IPR002882">
    <property type="entry name" value="CofD"/>
</dbReference>
<dbReference type="InterPro" id="IPR038136">
    <property type="entry name" value="CofD-like_dom_sf"/>
</dbReference>
<dbReference type="InterPro" id="IPR010119">
    <property type="entry name" value="Gluconeogen_factor"/>
</dbReference>
<dbReference type="NCBIfam" id="TIGR01826">
    <property type="entry name" value="CofD_related"/>
    <property type="match status" value="1"/>
</dbReference>
<dbReference type="PANTHER" id="PTHR30135:SF3">
    <property type="entry name" value="GLUCONEOGENESIS FACTOR-RELATED"/>
    <property type="match status" value="1"/>
</dbReference>
<dbReference type="PANTHER" id="PTHR30135">
    <property type="entry name" value="UNCHARACTERIZED PROTEIN YVCK-RELATED"/>
    <property type="match status" value="1"/>
</dbReference>
<dbReference type="Pfam" id="PF01933">
    <property type="entry name" value="CofD"/>
    <property type="match status" value="1"/>
</dbReference>
<dbReference type="SUPFAM" id="SSF142338">
    <property type="entry name" value="CofD-like"/>
    <property type="match status" value="1"/>
</dbReference>
<feature type="chain" id="PRO_0000107814" description="Putative gluconeogenesis factor">
    <location>
        <begin position="1"/>
        <end position="325"/>
    </location>
</feature>
<evidence type="ECO:0000255" key="1">
    <source>
        <dbReference type="HAMAP-Rule" id="MF_00973"/>
    </source>
</evidence>
<accession>Q9A0R7</accession>
<accession>Q48ZR0</accession>
<gene>
    <name type="ordered locus">SPy_0653</name>
    <name type="ordered locus">M5005_Spy0540</name>
</gene>
<protein>
    <recommendedName>
        <fullName evidence="1">Putative gluconeogenesis factor</fullName>
    </recommendedName>
</protein>
<reference key="1">
    <citation type="journal article" date="2001" name="Proc. Natl. Acad. Sci. U.S.A.">
        <title>Complete genome sequence of an M1 strain of Streptococcus pyogenes.</title>
        <authorList>
            <person name="Ferretti J.J."/>
            <person name="McShan W.M."/>
            <person name="Ajdic D.J."/>
            <person name="Savic D.J."/>
            <person name="Savic G."/>
            <person name="Lyon K."/>
            <person name="Primeaux C."/>
            <person name="Sezate S."/>
            <person name="Suvorov A.N."/>
            <person name="Kenton S."/>
            <person name="Lai H.S."/>
            <person name="Lin S.P."/>
            <person name="Qian Y."/>
            <person name="Jia H.G."/>
            <person name="Najar F.Z."/>
            <person name="Ren Q."/>
            <person name="Zhu H."/>
            <person name="Song L."/>
            <person name="White J."/>
            <person name="Yuan X."/>
            <person name="Clifton S.W."/>
            <person name="Roe B.A."/>
            <person name="McLaughlin R.E."/>
        </authorList>
    </citation>
    <scope>NUCLEOTIDE SEQUENCE [LARGE SCALE GENOMIC DNA]</scope>
    <source>
        <strain>ATCC 700294 / SF370 / Serotype M1</strain>
    </source>
</reference>
<reference key="2">
    <citation type="journal article" date="2005" name="J. Infect. Dis.">
        <title>Evolutionary origin and emergence of a highly successful clone of serotype M1 group A Streptococcus involved multiple horizontal gene transfer events.</title>
        <authorList>
            <person name="Sumby P."/>
            <person name="Porcella S.F."/>
            <person name="Madrigal A.G."/>
            <person name="Barbian K.D."/>
            <person name="Virtaneva K."/>
            <person name="Ricklefs S.M."/>
            <person name="Sturdevant D.E."/>
            <person name="Graham M.R."/>
            <person name="Vuopio-Varkila J."/>
            <person name="Hoe N.P."/>
            <person name="Musser J.M."/>
        </authorList>
    </citation>
    <scope>NUCLEOTIDE SEQUENCE [LARGE SCALE GENOMIC DNA]</scope>
    <source>
        <strain>ATCC BAA-947 / MGAS5005 / Serotype M1</strain>
    </source>
</reference>
<comment type="function">
    <text evidence="1">Required for morphogenesis under gluconeogenic growth conditions.</text>
</comment>
<comment type="subcellular location">
    <subcellularLocation>
        <location evidence="1">Cytoplasm</location>
    </subcellularLocation>
</comment>
<comment type="similarity">
    <text evidence="1">Belongs to the gluconeogenesis factor family.</text>
</comment>